<gene>
    <name evidence="1" type="primary">grpE</name>
    <name type="ordered locus">AHA_2984</name>
</gene>
<dbReference type="EMBL" id="CP000462">
    <property type="protein sequence ID" value="ABK37883.1"/>
    <property type="molecule type" value="Genomic_DNA"/>
</dbReference>
<dbReference type="RefSeq" id="WP_011706782.1">
    <property type="nucleotide sequence ID" value="NC_008570.1"/>
</dbReference>
<dbReference type="RefSeq" id="YP_857488.1">
    <property type="nucleotide sequence ID" value="NC_008570.1"/>
</dbReference>
<dbReference type="SMR" id="A0KMI7"/>
<dbReference type="STRING" id="380703.AHA_2984"/>
<dbReference type="EnsemblBacteria" id="ABK37883">
    <property type="protein sequence ID" value="ABK37883"/>
    <property type="gene ID" value="AHA_2984"/>
</dbReference>
<dbReference type="GeneID" id="4488920"/>
<dbReference type="KEGG" id="aha:AHA_2984"/>
<dbReference type="PATRIC" id="fig|380703.7.peg.2983"/>
<dbReference type="eggNOG" id="COG0576">
    <property type="taxonomic scope" value="Bacteria"/>
</dbReference>
<dbReference type="HOGENOM" id="CLU_057217_6_0_6"/>
<dbReference type="OrthoDB" id="9789811at2"/>
<dbReference type="Proteomes" id="UP000000756">
    <property type="component" value="Chromosome"/>
</dbReference>
<dbReference type="GO" id="GO:0005829">
    <property type="term" value="C:cytosol"/>
    <property type="evidence" value="ECO:0007669"/>
    <property type="project" value="TreeGrafter"/>
</dbReference>
<dbReference type="GO" id="GO:0000774">
    <property type="term" value="F:adenyl-nucleotide exchange factor activity"/>
    <property type="evidence" value="ECO:0007669"/>
    <property type="project" value="InterPro"/>
</dbReference>
<dbReference type="GO" id="GO:0042803">
    <property type="term" value="F:protein homodimerization activity"/>
    <property type="evidence" value="ECO:0007669"/>
    <property type="project" value="InterPro"/>
</dbReference>
<dbReference type="GO" id="GO:0051087">
    <property type="term" value="F:protein-folding chaperone binding"/>
    <property type="evidence" value="ECO:0007669"/>
    <property type="project" value="InterPro"/>
</dbReference>
<dbReference type="GO" id="GO:0051082">
    <property type="term" value="F:unfolded protein binding"/>
    <property type="evidence" value="ECO:0007669"/>
    <property type="project" value="TreeGrafter"/>
</dbReference>
<dbReference type="GO" id="GO:0006457">
    <property type="term" value="P:protein folding"/>
    <property type="evidence" value="ECO:0007669"/>
    <property type="project" value="InterPro"/>
</dbReference>
<dbReference type="CDD" id="cd00446">
    <property type="entry name" value="GrpE"/>
    <property type="match status" value="1"/>
</dbReference>
<dbReference type="FunFam" id="2.30.22.10:FF:000001">
    <property type="entry name" value="Protein GrpE"/>
    <property type="match status" value="1"/>
</dbReference>
<dbReference type="Gene3D" id="3.90.20.20">
    <property type="match status" value="1"/>
</dbReference>
<dbReference type="Gene3D" id="2.30.22.10">
    <property type="entry name" value="Head domain of nucleotide exchange factor GrpE"/>
    <property type="match status" value="1"/>
</dbReference>
<dbReference type="HAMAP" id="MF_01151">
    <property type="entry name" value="GrpE"/>
    <property type="match status" value="1"/>
</dbReference>
<dbReference type="InterPro" id="IPR000740">
    <property type="entry name" value="GrpE"/>
</dbReference>
<dbReference type="InterPro" id="IPR013805">
    <property type="entry name" value="GrpE_coiled_coil"/>
</dbReference>
<dbReference type="InterPro" id="IPR009012">
    <property type="entry name" value="GrpE_head"/>
</dbReference>
<dbReference type="NCBIfam" id="NF010737">
    <property type="entry name" value="PRK14139.1"/>
    <property type="match status" value="1"/>
</dbReference>
<dbReference type="NCBIfam" id="NF010738">
    <property type="entry name" value="PRK14140.1"/>
    <property type="match status" value="1"/>
</dbReference>
<dbReference type="NCBIfam" id="NF010748">
    <property type="entry name" value="PRK14150.1"/>
    <property type="match status" value="1"/>
</dbReference>
<dbReference type="PANTHER" id="PTHR21237">
    <property type="entry name" value="GRPE PROTEIN"/>
    <property type="match status" value="1"/>
</dbReference>
<dbReference type="PANTHER" id="PTHR21237:SF23">
    <property type="entry name" value="GRPE PROTEIN HOMOLOG, MITOCHONDRIAL"/>
    <property type="match status" value="1"/>
</dbReference>
<dbReference type="Pfam" id="PF01025">
    <property type="entry name" value="GrpE"/>
    <property type="match status" value="1"/>
</dbReference>
<dbReference type="PRINTS" id="PR00773">
    <property type="entry name" value="GRPEPROTEIN"/>
</dbReference>
<dbReference type="SUPFAM" id="SSF58014">
    <property type="entry name" value="Coiled-coil domain of nucleotide exchange factor GrpE"/>
    <property type="match status" value="1"/>
</dbReference>
<dbReference type="SUPFAM" id="SSF51064">
    <property type="entry name" value="Head domain of nucleotide exchange factor GrpE"/>
    <property type="match status" value="1"/>
</dbReference>
<dbReference type="PROSITE" id="PS01071">
    <property type="entry name" value="GRPE"/>
    <property type="match status" value="1"/>
</dbReference>
<proteinExistence type="inferred from homology"/>
<name>GRPE_AERHH</name>
<sequence length="191" mass="21167">MNHEEQKVEAMEQVEAQPVEPTDVDSEVTAEQARIAELEAQLDAAQQASLEERERAIRAVAEMENLRRRAAQDVEKAHKFALEKFAAELLPVLDNLERAIELADKENEALKPMIEGVELTLKSMQSSVGKFGLNPLDPLNQPFDPNAHQAMSMIENAELAPNTVIAVMQKGYELNGRVIRPAMVMVSKAPA</sequence>
<organism>
    <name type="scientific">Aeromonas hydrophila subsp. hydrophila (strain ATCC 7966 / DSM 30187 / BCRC 13018 / CCUG 14551 / JCM 1027 / KCTC 2358 / NCIMB 9240 / NCTC 8049)</name>
    <dbReference type="NCBI Taxonomy" id="380703"/>
    <lineage>
        <taxon>Bacteria</taxon>
        <taxon>Pseudomonadati</taxon>
        <taxon>Pseudomonadota</taxon>
        <taxon>Gammaproteobacteria</taxon>
        <taxon>Aeromonadales</taxon>
        <taxon>Aeromonadaceae</taxon>
        <taxon>Aeromonas</taxon>
    </lineage>
</organism>
<accession>A0KMI7</accession>
<reference key="1">
    <citation type="journal article" date="2006" name="J. Bacteriol.">
        <title>Genome sequence of Aeromonas hydrophila ATCC 7966T: jack of all trades.</title>
        <authorList>
            <person name="Seshadri R."/>
            <person name="Joseph S.W."/>
            <person name="Chopra A.K."/>
            <person name="Sha J."/>
            <person name="Shaw J."/>
            <person name="Graf J."/>
            <person name="Haft D.H."/>
            <person name="Wu M."/>
            <person name="Ren Q."/>
            <person name="Rosovitz M.J."/>
            <person name="Madupu R."/>
            <person name="Tallon L."/>
            <person name="Kim M."/>
            <person name="Jin S."/>
            <person name="Vuong H."/>
            <person name="Stine O.C."/>
            <person name="Ali A."/>
            <person name="Horneman A.J."/>
            <person name="Heidelberg J.F."/>
        </authorList>
    </citation>
    <scope>NUCLEOTIDE SEQUENCE [LARGE SCALE GENOMIC DNA]</scope>
    <source>
        <strain>ATCC 7966 / DSM 30187 / BCRC 13018 / CCUG 14551 / JCM 1027 / KCTC 2358 / NCIMB 9240 / NCTC 8049</strain>
    </source>
</reference>
<protein>
    <recommendedName>
        <fullName evidence="1">Protein GrpE</fullName>
    </recommendedName>
    <alternativeName>
        <fullName evidence="1">HSP-70 cofactor</fullName>
    </alternativeName>
</protein>
<keyword id="KW-0143">Chaperone</keyword>
<keyword id="KW-0963">Cytoplasm</keyword>
<keyword id="KW-1185">Reference proteome</keyword>
<keyword id="KW-0346">Stress response</keyword>
<feature type="chain" id="PRO_1000137532" description="Protein GrpE">
    <location>
        <begin position="1"/>
        <end position="191"/>
    </location>
</feature>
<feature type="region of interest" description="Disordered" evidence="2">
    <location>
        <begin position="1"/>
        <end position="28"/>
    </location>
</feature>
<feature type="compositionally biased region" description="Basic and acidic residues" evidence="2">
    <location>
        <begin position="1"/>
        <end position="10"/>
    </location>
</feature>
<comment type="function">
    <text evidence="1">Participates actively in the response to hyperosmotic and heat shock by preventing the aggregation of stress-denatured proteins, in association with DnaK and GrpE. It is the nucleotide exchange factor for DnaK and may function as a thermosensor. Unfolded proteins bind initially to DnaJ; upon interaction with the DnaJ-bound protein, DnaK hydrolyzes its bound ATP, resulting in the formation of a stable complex. GrpE releases ADP from DnaK; ATP binding to DnaK triggers the release of the substrate protein, thus completing the reaction cycle. Several rounds of ATP-dependent interactions between DnaJ, DnaK and GrpE are required for fully efficient folding.</text>
</comment>
<comment type="subunit">
    <text evidence="1">Homodimer.</text>
</comment>
<comment type="subcellular location">
    <subcellularLocation>
        <location evidence="1">Cytoplasm</location>
    </subcellularLocation>
</comment>
<comment type="similarity">
    <text evidence="1">Belongs to the GrpE family.</text>
</comment>
<evidence type="ECO:0000255" key="1">
    <source>
        <dbReference type="HAMAP-Rule" id="MF_01151"/>
    </source>
</evidence>
<evidence type="ECO:0000256" key="2">
    <source>
        <dbReference type="SAM" id="MobiDB-lite"/>
    </source>
</evidence>